<dbReference type="EC" id="3.6.5.3" evidence="2"/>
<dbReference type="EMBL" id="AE016879">
    <property type="protein sequence ID" value="AAP24162.1"/>
    <property type="molecule type" value="Genomic_DNA"/>
</dbReference>
<dbReference type="EMBL" id="AE017334">
    <property type="protein sequence ID" value="AAT29188.1"/>
    <property type="molecule type" value="Genomic_DNA"/>
</dbReference>
<dbReference type="EMBL" id="AE017225">
    <property type="protein sequence ID" value="AAT52445.1"/>
    <property type="molecule type" value="Genomic_DNA"/>
</dbReference>
<dbReference type="RefSeq" id="NP_842676.1">
    <property type="nucleotide sequence ID" value="NC_003997.3"/>
</dbReference>
<dbReference type="RefSeq" id="WP_001029614.1">
    <property type="nucleotide sequence ID" value="NZ_WXXJ01000051.1"/>
</dbReference>
<dbReference type="RefSeq" id="YP_026394.1">
    <property type="nucleotide sequence ID" value="NC_005945.1"/>
</dbReference>
<dbReference type="SMR" id="Q81VT2"/>
<dbReference type="STRING" id="261594.GBAA_0108"/>
<dbReference type="DNASU" id="1087644"/>
<dbReference type="GeneID" id="93010945"/>
<dbReference type="KEGG" id="ban:BA_0108"/>
<dbReference type="KEGG" id="bar:GBAA_0108"/>
<dbReference type="KEGG" id="bat:BAS0108"/>
<dbReference type="PATRIC" id="fig|198094.11.peg.105"/>
<dbReference type="eggNOG" id="COG0050">
    <property type="taxonomic scope" value="Bacteria"/>
</dbReference>
<dbReference type="HOGENOM" id="CLU_007265_0_1_9"/>
<dbReference type="OMA" id="KTHANIG"/>
<dbReference type="OrthoDB" id="9804504at2"/>
<dbReference type="Proteomes" id="UP000000427">
    <property type="component" value="Chromosome"/>
</dbReference>
<dbReference type="Proteomes" id="UP000000594">
    <property type="component" value="Chromosome"/>
</dbReference>
<dbReference type="GO" id="GO:0005829">
    <property type="term" value="C:cytosol"/>
    <property type="evidence" value="ECO:0007669"/>
    <property type="project" value="TreeGrafter"/>
</dbReference>
<dbReference type="GO" id="GO:0005525">
    <property type="term" value="F:GTP binding"/>
    <property type="evidence" value="ECO:0007669"/>
    <property type="project" value="UniProtKB-UniRule"/>
</dbReference>
<dbReference type="GO" id="GO:0003924">
    <property type="term" value="F:GTPase activity"/>
    <property type="evidence" value="ECO:0007669"/>
    <property type="project" value="InterPro"/>
</dbReference>
<dbReference type="GO" id="GO:0003746">
    <property type="term" value="F:translation elongation factor activity"/>
    <property type="evidence" value="ECO:0007669"/>
    <property type="project" value="UniProtKB-UniRule"/>
</dbReference>
<dbReference type="CDD" id="cd01884">
    <property type="entry name" value="EF_Tu"/>
    <property type="match status" value="1"/>
</dbReference>
<dbReference type="CDD" id="cd03697">
    <property type="entry name" value="EFTU_II"/>
    <property type="match status" value="1"/>
</dbReference>
<dbReference type="CDD" id="cd03707">
    <property type="entry name" value="EFTU_III"/>
    <property type="match status" value="1"/>
</dbReference>
<dbReference type="FunFam" id="2.40.30.10:FF:000001">
    <property type="entry name" value="Elongation factor Tu"/>
    <property type="match status" value="1"/>
</dbReference>
<dbReference type="FunFam" id="3.40.50.300:FF:000003">
    <property type="entry name" value="Elongation factor Tu"/>
    <property type="match status" value="1"/>
</dbReference>
<dbReference type="Gene3D" id="3.40.50.300">
    <property type="entry name" value="P-loop containing nucleotide triphosphate hydrolases"/>
    <property type="match status" value="1"/>
</dbReference>
<dbReference type="Gene3D" id="2.40.30.10">
    <property type="entry name" value="Translation factors"/>
    <property type="match status" value="2"/>
</dbReference>
<dbReference type="HAMAP" id="MF_00118_B">
    <property type="entry name" value="EF_Tu_B"/>
    <property type="match status" value="1"/>
</dbReference>
<dbReference type="InterPro" id="IPR041709">
    <property type="entry name" value="EF-Tu_GTP-bd"/>
</dbReference>
<dbReference type="InterPro" id="IPR050055">
    <property type="entry name" value="EF-Tu_GTPase"/>
</dbReference>
<dbReference type="InterPro" id="IPR004161">
    <property type="entry name" value="EFTu-like_2"/>
</dbReference>
<dbReference type="InterPro" id="IPR033720">
    <property type="entry name" value="EFTU_2"/>
</dbReference>
<dbReference type="InterPro" id="IPR031157">
    <property type="entry name" value="G_TR_CS"/>
</dbReference>
<dbReference type="InterPro" id="IPR027417">
    <property type="entry name" value="P-loop_NTPase"/>
</dbReference>
<dbReference type="InterPro" id="IPR005225">
    <property type="entry name" value="Small_GTP-bd"/>
</dbReference>
<dbReference type="InterPro" id="IPR000795">
    <property type="entry name" value="T_Tr_GTP-bd_dom"/>
</dbReference>
<dbReference type="InterPro" id="IPR009000">
    <property type="entry name" value="Transl_B-barrel_sf"/>
</dbReference>
<dbReference type="InterPro" id="IPR009001">
    <property type="entry name" value="Transl_elong_EF1A/Init_IF2_C"/>
</dbReference>
<dbReference type="InterPro" id="IPR004541">
    <property type="entry name" value="Transl_elong_EFTu/EF1A_bac/org"/>
</dbReference>
<dbReference type="InterPro" id="IPR004160">
    <property type="entry name" value="Transl_elong_EFTu/EF1A_C"/>
</dbReference>
<dbReference type="NCBIfam" id="TIGR00485">
    <property type="entry name" value="EF-Tu"/>
    <property type="match status" value="1"/>
</dbReference>
<dbReference type="NCBIfam" id="NF000766">
    <property type="entry name" value="PRK00049.1"/>
    <property type="match status" value="1"/>
</dbReference>
<dbReference type="NCBIfam" id="NF009372">
    <property type="entry name" value="PRK12735.1"/>
    <property type="match status" value="1"/>
</dbReference>
<dbReference type="NCBIfam" id="NF009373">
    <property type="entry name" value="PRK12736.1"/>
    <property type="match status" value="1"/>
</dbReference>
<dbReference type="NCBIfam" id="TIGR00231">
    <property type="entry name" value="small_GTP"/>
    <property type="match status" value="1"/>
</dbReference>
<dbReference type="PANTHER" id="PTHR43721:SF22">
    <property type="entry name" value="ELONGATION FACTOR TU, MITOCHONDRIAL"/>
    <property type="match status" value="1"/>
</dbReference>
<dbReference type="PANTHER" id="PTHR43721">
    <property type="entry name" value="ELONGATION FACTOR TU-RELATED"/>
    <property type="match status" value="1"/>
</dbReference>
<dbReference type="Pfam" id="PF00009">
    <property type="entry name" value="GTP_EFTU"/>
    <property type="match status" value="1"/>
</dbReference>
<dbReference type="Pfam" id="PF03144">
    <property type="entry name" value="GTP_EFTU_D2"/>
    <property type="match status" value="1"/>
</dbReference>
<dbReference type="Pfam" id="PF03143">
    <property type="entry name" value="GTP_EFTU_D3"/>
    <property type="match status" value="1"/>
</dbReference>
<dbReference type="PRINTS" id="PR00315">
    <property type="entry name" value="ELONGATNFCT"/>
</dbReference>
<dbReference type="SUPFAM" id="SSF50465">
    <property type="entry name" value="EF-Tu/eEF-1alpha/eIF2-gamma C-terminal domain"/>
    <property type="match status" value="1"/>
</dbReference>
<dbReference type="SUPFAM" id="SSF52540">
    <property type="entry name" value="P-loop containing nucleoside triphosphate hydrolases"/>
    <property type="match status" value="1"/>
</dbReference>
<dbReference type="SUPFAM" id="SSF50447">
    <property type="entry name" value="Translation proteins"/>
    <property type="match status" value="1"/>
</dbReference>
<dbReference type="PROSITE" id="PS00301">
    <property type="entry name" value="G_TR_1"/>
    <property type="match status" value="1"/>
</dbReference>
<dbReference type="PROSITE" id="PS51722">
    <property type="entry name" value="G_TR_2"/>
    <property type="match status" value="1"/>
</dbReference>
<comment type="function">
    <text evidence="2">GTP hydrolase that promotes the GTP-dependent binding of aminoacyl-tRNA to the A-site of ribosomes during protein biosynthesis.</text>
</comment>
<comment type="catalytic activity">
    <reaction evidence="2">
        <text>GTP + H2O = GDP + phosphate + H(+)</text>
        <dbReference type="Rhea" id="RHEA:19669"/>
        <dbReference type="ChEBI" id="CHEBI:15377"/>
        <dbReference type="ChEBI" id="CHEBI:15378"/>
        <dbReference type="ChEBI" id="CHEBI:37565"/>
        <dbReference type="ChEBI" id="CHEBI:43474"/>
        <dbReference type="ChEBI" id="CHEBI:58189"/>
        <dbReference type="EC" id="3.6.5.3"/>
    </reaction>
    <physiologicalReaction direction="left-to-right" evidence="2">
        <dbReference type="Rhea" id="RHEA:19670"/>
    </physiologicalReaction>
</comment>
<comment type="subunit">
    <text evidence="2">Monomer.</text>
</comment>
<comment type="subcellular location">
    <subcellularLocation>
        <location evidence="2">Cytoplasm</location>
    </subcellularLocation>
</comment>
<comment type="similarity">
    <text evidence="2">Belongs to the TRAFAC class translation factor GTPase superfamily. Classic translation factor GTPase family. EF-Tu/EF-1A subfamily.</text>
</comment>
<feature type="chain" id="PRO_0000091286" description="Elongation factor Tu">
    <location>
        <begin position="1"/>
        <end position="395"/>
    </location>
</feature>
<feature type="domain" description="tr-type G">
    <location>
        <begin position="10"/>
        <end position="204"/>
    </location>
</feature>
<feature type="region of interest" description="G1" evidence="1">
    <location>
        <begin position="19"/>
        <end position="26"/>
    </location>
</feature>
<feature type="region of interest" description="G2" evidence="1">
    <location>
        <begin position="60"/>
        <end position="64"/>
    </location>
</feature>
<feature type="region of interest" description="G3" evidence="1">
    <location>
        <begin position="81"/>
        <end position="84"/>
    </location>
</feature>
<feature type="region of interest" description="G4" evidence="1">
    <location>
        <begin position="136"/>
        <end position="139"/>
    </location>
</feature>
<feature type="region of interest" description="G5" evidence="1">
    <location>
        <begin position="174"/>
        <end position="176"/>
    </location>
</feature>
<feature type="binding site" evidence="2">
    <location>
        <begin position="19"/>
        <end position="26"/>
    </location>
    <ligand>
        <name>GTP</name>
        <dbReference type="ChEBI" id="CHEBI:37565"/>
    </ligand>
</feature>
<feature type="binding site" evidence="2">
    <location>
        <position position="26"/>
    </location>
    <ligand>
        <name>Mg(2+)</name>
        <dbReference type="ChEBI" id="CHEBI:18420"/>
    </ligand>
</feature>
<feature type="binding site" evidence="2">
    <location>
        <begin position="81"/>
        <end position="85"/>
    </location>
    <ligand>
        <name>GTP</name>
        <dbReference type="ChEBI" id="CHEBI:37565"/>
    </ligand>
</feature>
<feature type="binding site" evidence="2">
    <location>
        <begin position="136"/>
        <end position="139"/>
    </location>
    <ligand>
        <name>GTP</name>
        <dbReference type="ChEBI" id="CHEBI:37565"/>
    </ligand>
</feature>
<evidence type="ECO:0000250" key="1"/>
<evidence type="ECO:0000255" key="2">
    <source>
        <dbReference type="HAMAP-Rule" id="MF_00118"/>
    </source>
</evidence>
<reference key="1">
    <citation type="journal article" date="2003" name="Nature">
        <title>The genome sequence of Bacillus anthracis Ames and comparison to closely related bacteria.</title>
        <authorList>
            <person name="Read T.D."/>
            <person name="Peterson S.N."/>
            <person name="Tourasse N.J."/>
            <person name="Baillie L.W."/>
            <person name="Paulsen I.T."/>
            <person name="Nelson K.E."/>
            <person name="Tettelin H."/>
            <person name="Fouts D.E."/>
            <person name="Eisen J.A."/>
            <person name="Gill S.R."/>
            <person name="Holtzapple E.K."/>
            <person name="Okstad O.A."/>
            <person name="Helgason E."/>
            <person name="Rilstone J."/>
            <person name="Wu M."/>
            <person name="Kolonay J.F."/>
            <person name="Beanan M.J."/>
            <person name="Dodson R.J."/>
            <person name="Brinkac L.M."/>
            <person name="Gwinn M.L."/>
            <person name="DeBoy R.T."/>
            <person name="Madpu R."/>
            <person name="Daugherty S.C."/>
            <person name="Durkin A.S."/>
            <person name="Haft D.H."/>
            <person name="Nelson W.C."/>
            <person name="Peterson J.D."/>
            <person name="Pop M."/>
            <person name="Khouri H.M."/>
            <person name="Radune D."/>
            <person name="Benton J.L."/>
            <person name="Mahamoud Y."/>
            <person name="Jiang L."/>
            <person name="Hance I.R."/>
            <person name="Weidman J.F."/>
            <person name="Berry K.J."/>
            <person name="Plaut R.D."/>
            <person name="Wolf A.M."/>
            <person name="Watkins K.L."/>
            <person name="Nierman W.C."/>
            <person name="Hazen A."/>
            <person name="Cline R.T."/>
            <person name="Redmond C."/>
            <person name="Thwaite J.E."/>
            <person name="White O."/>
            <person name="Salzberg S.L."/>
            <person name="Thomason B."/>
            <person name="Friedlander A.M."/>
            <person name="Koehler T.M."/>
            <person name="Hanna P.C."/>
            <person name="Kolstoe A.-B."/>
            <person name="Fraser C.M."/>
        </authorList>
    </citation>
    <scope>NUCLEOTIDE SEQUENCE [LARGE SCALE GENOMIC DNA]</scope>
    <source>
        <strain>Ames / isolate Porton</strain>
    </source>
</reference>
<reference key="2">
    <citation type="journal article" date="2009" name="J. Bacteriol.">
        <title>The complete genome sequence of Bacillus anthracis Ames 'Ancestor'.</title>
        <authorList>
            <person name="Ravel J."/>
            <person name="Jiang L."/>
            <person name="Stanley S.T."/>
            <person name="Wilson M.R."/>
            <person name="Decker R.S."/>
            <person name="Read T.D."/>
            <person name="Worsham P."/>
            <person name="Keim P.S."/>
            <person name="Salzberg S.L."/>
            <person name="Fraser-Liggett C.M."/>
            <person name="Rasko D.A."/>
        </authorList>
    </citation>
    <scope>NUCLEOTIDE SEQUENCE [LARGE SCALE GENOMIC DNA]</scope>
    <source>
        <strain>Ames ancestor</strain>
    </source>
</reference>
<reference key="3">
    <citation type="submission" date="2004-01" db="EMBL/GenBank/DDBJ databases">
        <title>Complete genome sequence of Bacillus anthracis Sterne.</title>
        <authorList>
            <person name="Brettin T.S."/>
            <person name="Bruce D."/>
            <person name="Challacombe J.F."/>
            <person name="Gilna P."/>
            <person name="Han C."/>
            <person name="Hill K."/>
            <person name="Hitchcock P."/>
            <person name="Jackson P."/>
            <person name="Keim P."/>
            <person name="Longmire J."/>
            <person name="Lucas S."/>
            <person name="Okinaka R."/>
            <person name="Richardson P."/>
            <person name="Rubin E."/>
            <person name="Tice H."/>
        </authorList>
    </citation>
    <scope>NUCLEOTIDE SEQUENCE [LARGE SCALE GENOMIC DNA]</scope>
    <source>
        <strain>Sterne</strain>
    </source>
</reference>
<keyword id="KW-0963">Cytoplasm</keyword>
<keyword id="KW-0251">Elongation factor</keyword>
<keyword id="KW-0342">GTP-binding</keyword>
<keyword id="KW-0378">Hydrolase</keyword>
<keyword id="KW-0460">Magnesium</keyword>
<keyword id="KW-0479">Metal-binding</keyword>
<keyword id="KW-0547">Nucleotide-binding</keyword>
<keyword id="KW-0648">Protein biosynthesis</keyword>
<keyword id="KW-1185">Reference proteome</keyword>
<name>EFTU_BACAN</name>
<protein>
    <recommendedName>
        <fullName evidence="2">Elongation factor Tu</fullName>
        <shortName evidence="2">EF-Tu</shortName>
        <ecNumber evidence="2">3.6.5.3</ecNumber>
    </recommendedName>
</protein>
<organism>
    <name type="scientific">Bacillus anthracis</name>
    <dbReference type="NCBI Taxonomy" id="1392"/>
    <lineage>
        <taxon>Bacteria</taxon>
        <taxon>Bacillati</taxon>
        <taxon>Bacillota</taxon>
        <taxon>Bacilli</taxon>
        <taxon>Bacillales</taxon>
        <taxon>Bacillaceae</taxon>
        <taxon>Bacillus</taxon>
        <taxon>Bacillus cereus group</taxon>
    </lineage>
</organism>
<accession>Q81VT2</accession>
<accession>Q6I4T6</accession>
<accession>Q6KYI2</accession>
<sequence>MAKAKFERSKPHVNIGTIGHVDHGKTTLTAAITTVLAKAGGAEARGYDQIDAAPEERERGITISTAHVEYETETRHYAHVDCPGHADYVKNMITGAAQMDGGILVVSAADGPMPQTREHILLSRQVGVPYIVVFLNKCDMVDDEELLELVEMEVRDLLSEYGFPGDDIPVIKGSALKALQGEADWEAKIIELMAEVDAYIPTPERETDKPFLMPVEDVFSITGRGTVATGRVERGIVKVGDVVEIIGLAEENASTTVTGVEMFRKLLDQAQAGDNIGALLRGVAREDIQRGQVLAKSGSVKAHAKFKAEVFVLSKEEGGRHTPFFANYRPQFYFRTTDVTGIIQLPEGTEMVMPGDNIEMTIELIAPIAIEEGTKFSIREGGRTVGYGVVATIVE</sequence>
<gene>
    <name evidence="2" type="primary">tuf</name>
    <name type="ordered locus">BA_0108</name>
    <name type="ordered locus">GBAA_0108</name>
    <name type="ordered locus">BAS0108</name>
</gene>
<proteinExistence type="inferred from homology"/>